<protein>
    <recommendedName>
        <fullName>Signal-regulatory protein beta-1</fullName>
        <shortName>SIRP-beta-1</shortName>
    </recommendedName>
    <alternativeName>
        <fullName>CD172 antigen-like family member B</fullName>
    </alternativeName>
    <cdAntigenName>CD172b</cdAntigenName>
</protein>
<feature type="signal peptide" evidence="1">
    <location>
        <begin position="1"/>
        <end position="29"/>
    </location>
</feature>
<feature type="chain" id="PRO_0000014956" description="Signal-regulatory protein beta-1">
    <location>
        <begin position="30"/>
        <end position="398"/>
    </location>
</feature>
<feature type="topological domain" description="Extracellular" evidence="1">
    <location>
        <begin position="30"/>
        <end position="371"/>
    </location>
</feature>
<feature type="transmembrane region" description="Helical" evidence="1">
    <location>
        <begin position="372"/>
        <end position="392"/>
    </location>
</feature>
<feature type="topological domain" description="Cytoplasmic" evidence="1">
    <location>
        <begin position="393"/>
        <end position="398"/>
    </location>
</feature>
<feature type="domain" description="Ig-like V-type">
    <location>
        <begin position="30"/>
        <end position="136"/>
    </location>
</feature>
<feature type="domain" description="Ig-like C1-type 1">
    <location>
        <begin position="147"/>
        <end position="246"/>
    </location>
</feature>
<feature type="domain" description="Ig-like C1-type 2">
    <location>
        <begin position="253"/>
        <end position="347"/>
    </location>
</feature>
<feature type="glycosylation site" description="N-linked (GlcNAc...) asparagine" evidence="8">
    <location>
        <position position="244"/>
    </location>
</feature>
<feature type="glycosylation site" description="N-linked (GlcNAc...) asparagine" evidence="1">
    <location>
        <position position="269"/>
    </location>
</feature>
<feature type="glycosylation site" description="N-linked (GlcNAc...) asparagine" evidence="1">
    <location>
        <position position="291"/>
    </location>
</feature>
<feature type="disulfide bond" evidence="2 9">
    <location>
        <begin position="54"/>
        <end position="120"/>
    </location>
</feature>
<feature type="disulfide bond" evidence="2">
    <location>
        <begin position="169"/>
        <end position="227"/>
    </location>
</feature>
<feature type="disulfide bond" description="Interchain" evidence="2 9">
    <location>
        <position position="320"/>
    </location>
</feature>
<feature type="splice variant" id="VSP_007026" description="In isoform 2." evidence="11">
    <location>
        <begin position="145"/>
        <end position="361"/>
    </location>
</feature>
<feature type="sequence variant" id="VAR_028789" description="In dbSNP:rs1535882.">
    <original>R</original>
    <variation>G</variation>
    <location>
        <position position="23"/>
    </location>
</feature>
<feature type="sequence variant" id="VAR_028790" description="In dbSNP:rs2746603.">
    <original>R</original>
    <variation>H</variation>
    <location>
        <position position="53"/>
    </location>
</feature>
<feature type="sequence variant" id="VAR_028791" description="In dbSNP:rs2253427." evidence="5 10">
    <original>I</original>
    <variation>M</variation>
    <location>
        <position position="229"/>
    </location>
</feature>
<feature type="sequence variant" id="VAR_028792" description="In dbSNP:rs2243603." evidence="5 6 10">
    <original>A</original>
    <variation>P</variation>
    <location>
        <position position="363"/>
    </location>
</feature>
<feature type="sequence conflict" description="In Ref. 1; CAA71404." evidence="12" ref="1">
    <original>D</original>
    <variation>N</variation>
    <location>
        <position position="102"/>
    </location>
</feature>
<feature type="sequence conflict" description="In Ref. 2; BAG36297." evidence="12" ref="2">
    <original>S</original>
    <variation>R</variation>
    <location>
        <position position="106"/>
    </location>
</feature>
<feature type="strand" evidence="14">
    <location>
        <begin position="40"/>
        <end position="45"/>
    </location>
</feature>
<feature type="strand" evidence="14">
    <location>
        <begin position="50"/>
        <end position="52"/>
    </location>
</feature>
<feature type="strand" evidence="14">
    <location>
        <begin position="55"/>
        <end position="57"/>
    </location>
</feature>
<feature type="strand" evidence="14">
    <location>
        <begin position="65"/>
        <end position="69"/>
    </location>
</feature>
<feature type="strand" evidence="14">
    <location>
        <begin position="76"/>
        <end position="84"/>
    </location>
</feature>
<feature type="strand" evidence="14">
    <location>
        <begin position="89"/>
        <end position="91"/>
    </location>
</feature>
<feature type="strand" evidence="13">
    <location>
        <begin position="95"/>
        <end position="99"/>
    </location>
</feature>
<feature type="strand" evidence="14">
    <location>
        <begin position="105"/>
        <end position="107"/>
    </location>
</feature>
<feature type="helix" evidence="14">
    <location>
        <begin position="112"/>
        <end position="114"/>
    </location>
</feature>
<feature type="strand" evidence="14">
    <location>
        <begin position="116"/>
        <end position="124"/>
    </location>
</feature>
<feature type="strand" evidence="14">
    <location>
        <begin position="127"/>
        <end position="129"/>
    </location>
</feature>
<feature type="strand" evidence="14">
    <location>
        <begin position="131"/>
        <end position="135"/>
    </location>
</feature>
<feature type="strand" evidence="14">
    <location>
        <begin position="139"/>
        <end position="144"/>
    </location>
</feature>
<dbReference type="EMBL" id="Y10376">
    <property type="protein sequence ID" value="CAA71404.1"/>
    <property type="molecule type" value="mRNA"/>
</dbReference>
<dbReference type="EMBL" id="AK313517">
    <property type="protein sequence ID" value="BAG36297.1"/>
    <property type="molecule type" value="mRNA"/>
</dbReference>
<dbReference type="EMBL" id="AL049634">
    <property type="status" value="NOT_ANNOTATED_CDS"/>
    <property type="molecule type" value="Genomic_DNA"/>
</dbReference>
<dbReference type="EMBL" id="AL138804">
    <property type="status" value="NOT_ANNOTATED_CDS"/>
    <property type="molecule type" value="Genomic_DNA"/>
</dbReference>
<dbReference type="EMBL" id="BC025286">
    <property type="protein sequence ID" value="AAH25286.1"/>
    <property type="molecule type" value="mRNA"/>
</dbReference>
<dbReference type="EMBL" id="BC075835">
    <property type="protein sequence ID" value="AAH75835.1"/>
    <property type="molecule type" value="mRNA"/>
</dbReference>
<dbReference type="CCDS" id="CCDS13019.1">
    <molecule id="O00241-1"/>
</dbReference>
<dbReference type="CCDS" id="CCDS42850.1">
    <molecule id="O00241-2"/>
</dbReference>
<dbReference type="RefSeq" id="NP_001077379.1">
    <molecule id="O00241-2"/>
    <property type="nucleotide sequence ID" value="NM_001083910.4"/>
</dbReference>
<dbReference type="RefSeq" id="NP_001317568.1">
    <property type="nucleotide sequence ID" value="NM_001330639.1"/>
</dbReference>
<dbReference type="RefSeq" id="NP_006056.2">
    <molecule id="O00241-1"/>
    <property type="nucleotide sequence ID" value="NM_006065.5"/>
</dbReference>
<dbReference type="RefSeq" id="XP_016883066.1">
    <property type="nucleotide sequence ID" value="XM_017027577.1"/>
</dbReference>
<dbReference type="PDB" id="2D9C">
    <property type="method" value="NMR"/>
    <property type="chains" value="A=32-154"/>
</dbReference>
<dbReference type="PDB" id="2JJU">
    <property type="method" value="X-ray"/>
    <property type="resolution" value="1.19 A"/>
    <property type="chains" value="A/B=30-148"/>
</dbReference>
<dbReference type="PDBsum" id="2D9C"/>
<dbReference type="PDBsum" id="2JJU"/>
<dbReference type="SMR" id="O00241"/>
<dbReference type="BioGRID" id="115609">
    <property type="interactions" value="11"/>
</dbReference>
<dbReference type="FunCoup" id="O00241">
    <property type="interactions" value="94"/>
</dbReference>
<dbReference type="IntAct" id="O00241">
    <property type="interactions" value="12"/>
</dbReference>
<dbReference type="STRING" id="9606.ENSP00000371018"/>
<dbReference type="TCDB" id="8.A.23.1.34">
    <property type="family name" value="the basigin (basigin) family"/>
</dbReference>
<dbReference type="GlyCosmos" id="O00241">
    <property type="glycosylation" value="3 sites, 11 glycans"/>
</dbReference>
<dbReference type="GlyGen" id="O00241">
    <property type="glycosylation" value="7 sites, 15 N-linked glycans (3 sites)"/>
</dbReference>
<dbReference type="iPTMnet" id="O00241"/>
<dbReference type="PhosphoSitePlus" id="O00241"/>
<dbReference type="BioMuta" id="SIRPB1"/>
<dbReference type="jPOST" id="O00241"/>
<dbReference type="MassIVE" id="O00241"/>
<dbReference type="PaxDb" id="9606-ENSP00000371018"/>
<dbReference type="PeptideAtlas" id="O00241"/>
<dbReference type="ProteomicsDB" id="47803">
    <molecule id="O00241-1"/>
</dbReference>
<dbReference type="ProteomicsDB" id="47804">
    <molecule id="O00241-2"/>
</dbReference>
<dbReference type="Antibodypedia" id="23124">
    <property type="antibodies" value="342 antibodies from 34 providers"/>
</dbReference>
<dbReference type="DNASU" id="10326"/>
<dbReference type="Ensembl" id="ENST00000381603.7">
    <molecule id="O00241-2"/>
    <property type="protein sequence ID" value="ENSP00000371016.3"/>
    <property type="gene ID" value="ENSG00000101307.16"/>
</dbReference>
<dbReference type="Ensembl" id="ENST00000381605.9">
    <molecule id="O00241-1"/>
    <property type="protein sequence ID" value="ENSP00000371018.5"/>
    <property type="gene ID" value="ENSG00000101307.16"/>
</dbReference>
<dbReference type="GeneID" id="10326"/>
<dbReference type="MANE-Select" id="ENST00000381605.9">
    <property type="protein sequence ID" value="ENSP00000371018.5"/>
    <property type="RefSeq nucleotide sequence ID" value="NM_006065.5"/>
    <property type="RefSeq protein sequence ID" value="NP_006056.2"/>
</dbReference>
<dbReference type="UCSC" id="uc002wfk.5">
    <molecule id="O00241-1"/>
    <property type="organism name" value="human"/>
</dbReference>
<dbReference type="AGR" id="HGNC:15928"/>
<dbReference type="CTD" id="10326"/>
<dbReference type="DisGeNET" id="10326"/>
<dbReference type="GeneCards" id="SIRPB1"/>
<dbReference type="HGNC" id="HGNC:15928">
    <property type="gene designation" value="SIRPB1"/>
</dbReference>
<dbReference type="HPA" id="ENSG00000101307">
    <property type="expression patterns" value="Tissue enhanced (bone marrow, lung, lymphoid tissue)"/>
</dbReference>
<dbReference type="MIM" id="603889">
    <property type="type" value="gene"/>
</dbReference>
<dbReference type="neXtProt" id="NX_O00241"/>
<dbReference type="OpenTargets" id="ENSG00000101307"/>
<dbReference type="PharmGKB" id="PA38051"/>
<dbReference type="VEuPathDB" id="HostDB:ENSG00000101307"/>
<dbReference type="eggNOG" id="ENOG502S1XD">
    <property type="taxonomic scope" value="Eukaryota"/>
</dbReference>
<dbReference type="GeneTree" id="ENSGT00960000186656"/>
<dbReference type="InParanoid" id="O00241"/>
<dbReference type="OrthoDB" id="6370831at2759"/>
<dbReference type="PAN-GO" id="O00241">
    <property type="GO annotations" value="3 GO annotations based on evolutionary models"/>
</dbReference>
<dbReference type="PhylomeDB" id="O00241"/>
<dbReference type="TreeFam" id="TF341862"/>
<dbReference type="PathwayCommons" id="O00241"/>
<dbReference type="Reactome" id="R-HSA-2172127">
    <property type="pathway name" value="DAP12 interactions"/>
</dbReference>
<dbReference type="Reactome" id="R-HSA-391160">
    <property type="pathway name" value="Signal regulatory protein family interactions"/>
</dbReference>
<dbReference type="Reactome" id="R-HSA-6798695">
    <property type="pathway name" value="Neutrophil degranulation"/>
</dbReference>
<dbReference type="SignaLink" id="O00241"/>
<dbReference type="BioGRID-ORCS" id="10326">
    <property type="hits" value="10 hits in 1145 CRISPR screens"/>
</dbReference>
<dbReference type="ChiTaRS" id="SIRPB1">
    <property type="organism name" value="human"/>
</dbReference>
<dbReference type="EvolutionaryTrace" id="O00241"/>
<dbReference type="GeneWiki" id="SIRPB1"/>
<dbReference type="GenomeRNAi" id="10326"/>
<dbReference type="Pharos" id="O00241">
    <property type="development level" value="Tbio"/>
</dbReference>
<dbReference type="Proteomes" id="UP000005640">
    <property type="component" value="Chromosome 20"/>
</dbReference>
<dbReference type="RNAct" id="O00241">
    <property type="molecule type" value="protein"/>
</dbReference>
<dbReference type="Bgee" id="ENSG00000101307">
    <property type="expression patterns" value="Expressed in monocyte and 122 other cell types or tissues"/>
</dbReference>
<dbReference type="ExpressionAtlas" id="O00241">
    <property type="expression patterns" value="baseline and differential"/>
</dbReference>
<dbReference type="GO" id="GO:0009986">
    <property type="term" value="C:cell surface"/>
    <property type="evidence" value="ECO:0000304"/>
    <property type="project" value="ARUK-UCL"/>
</dbReference>
<dbReference type="GO" id="GO:0005886">
    <property type="term" value="C:plasma membrane"/>
    <property type="evidence" value="ECO:0000318"/>
    <property type="project" value="GO_Central"/>
</dbReference>
<dbReference type="GO" id="GO:0030667">
    <property type="term" value="C:secretory granule membrane"/>
    <property type="evidence" value="ECO:0000304"/>
    <property type="project" value="Reactome"/>
</dbReference>
<dbReference type="GO" id="GO:0007166">
    <property type="term" value="P:cell surface receptor signaling pathway"/>
    <property type="evidence" value="ECO:0000304"/>
    <property type="project" value="ProtInc"/>
</dbReference>
<dbReference type="GO" id="GO:0050766">
    <property type="term" value="P:positive regulation of phagocytosis"/>
    <property type="evidence" value="ECO:0000318"/>
    <property type="project" value="GO_Central"/>
</dbReference>
<dbReference type="GO" id="GO:0050870">
    <property type="term" value="P:positive regulation of T cell activation"/>
    <property type="evidence" value="ECO:0000318"/>
    <property type="project" value="GO_Central"/>
</dbReference>
<dbReference type="GO" id="GO:0007165">
    <property type="term" value="P:signal transduction"/>
    <property type="evidence" value="ECO:0000304"/>
    <property type="project" value="ProtInc"/>
</dbReference>
<dbReference type="CDD" id="cd05772">
    <property type="entry name" value="IgC1_SIRP_domain_2"/>
    <property type="match status" value="1"/>
</dbReference>
<dbReference type="CDD" id="cd16085">
    <property type="entry name" value="IgC1_SIRP_domain_3"/>
    <property type="match status" value="1"/>
</dbReference>
<dbReference type="CDD" id="cd16097">
    <property type="entry name" value="IgV_SIRP"/>
    <property type="match status" value="1"/>
</dbReference>
<dbReference type="FunFam" id="2.60.40.10:FF:000490">
    <property type="entry name" value="Signal-regulatory protein beta 1"/>
    <property type="match status" value="1"/>
</dbReference>
<dbReference type="FunFam" id="2.60.40.10:FF:000295">
    <property type="entry name" value="Tyrosine-protein phosphatase non-receptor type substrate 1"/>
    <property type="match status" value="1"/>
</dbReference>
<dbReference type="FunFam" id="2.60.40.10:FF:000454">
    <property type="entry name" value="Tyrosine-protein phosphatase non-receptor type substrate 1"/>
    <property type="match status" value="1"/>
</dbReference>
<dbReference type="Gene3D" id="2.60.40.10">
    <property type="entry name" value="Immunoglobulins"/>
    <property type="match status" value="3"/>
</dbReference>
<dbReference type="InterPro" id="IPR051755">
    <property type="entry name" value="Ig-like_CS_Receptor"/>
</dbReference>
<dbReference type="InterPro" id="IPR007110">
    <property type="entry name" value="Ig-like_dom"/>
</dbReference>
<dbReference type="InterPro" id="IPR036179">
    <property type="entry name" value="Ig-like_dom_sf"/>
</dbReference>
<dbReference type="InterPro" id="IPR013783">
    <property type="entry name" value="Ig-like_fold"/>
</dbReference>
<dbReference type="InterPro" id="IPR003597">
    <property type="entry name" value="Ig_C1-set"/>
</dbReference>
<dbReference type="InterPro" id="IPR003599">
    <property type="entry name" value="Ig_sub"/>
</dbReference>
<dbReference type="InterPro" id="IPR013106">
    <property type="entry name" value="Ig_V-set"/>
</dbReference>
<dbReference type="PANTHER" id="PTHR19971">
    <property type="entry name" value="SIGNAL-REGULATORY PROTEIN BETA"/>
    <property type="match status" value="1"/>
</dbReference>
<dbReference type="Pfam" id="PF07654">
    <property type="entry name" value="C1-set"/>
    <property type="match status" value="2"/>
</dbReference>
<dbReference type="Pfam" id="PF07686">
    <property type="entry name" value="V-set"/>
    <property type="match status" value="1"/>
</dbReference>
<dbReference type="SMART" id="SM00409">
    <property type="entry name" value="IG"/>
    <property type="match status" value="2"/>
</dbReference>
<dbReference type="SMART" id="SM00407">
    <property type="entry name" value="IGc1"/>
    <property type="match status" value="2"/>
</dbReference>
<dbReference type="SUPFAM" id="SSF48726">
    <property type="entry name" value="Immunoglobulin"/>
    <property type="match status" value="3"/>
</dbReference>
<dbReference type="PROSITE" id="PS50835">
    <property type="entry name" value="IG_LIKE"/>
    <property type="match status" value="3"/>
</dbReference>
<accession>O00241</accession>
<accession>A6NLM2</accession>
<accession>B2R8V0</accession>
<accession>Q5TFQ9</accession>
<accession>Q5TFR0</accession>
<accession>Q8TB12</accession>
<accession>Q9H1U5</accession>
<accession>Q9Y4V0</accession>
<organism>
    <name type="scientific">Homo sapiens</name>
    <name type="common">Human</name>
    <dbReference type="NCBI Taxonomy" id="9606"/>
    <lineage>
        <taxon>Eukaryota</taxon>
        <taxon>Metazoa</taxon>
        <taxon>Chordata</taxon>
        <taxon>Craniata</taxon>
        <taxon>Vertebrata</taxon>
        <taxon>Euteleostomi</taxon>
        <taxon>Mammalia</taxon>
        <taxon>Eutheria</taxon>
        <taxon>Euarchontoglires</taxon>
        <taxon>Primates</taxon>
        <taxon>Haplorrhini</taxon>
        <taxon>Catarrhini</taxon>
        <taxon>Hominidae</taxon>
        <taxon>Homo</taxon>
    </lineage>
</organism>
<evidence type="ECO:0000255" key="1"/>
<evidence type="ECO:0000255" key="2">
    <source>
        <dbReference type="PROSITE-ProRule" id="PRU00114"/>
    </source>
</evidence>
<evidence type="ECO:0000269" key="3">
    <source>
    </source>
</evidence>
<evidence type="ECO:0000269" key="4">
    <source>
    </source>
</evidence>
<evidence type="ECO:0000269" key="5">
    <source>
    </source>
</evidence>
<evidence type="ECO:0000269" key="6">
    <source>
    </source>
</evidence>
<evidence type="ECO:0000269" key="7">
    <source>
    </source>
</evidence>
<evidence type="ECO:0000269" key="8">
    <source>
    </source>
</evidence>
<evidence type="ECO:0000269" key="9">
    <source>
    </source>
</evidence>
<evidence type="ECO:0000269" key="10">
    <source>
    </source>
</evidence>
<evidence type="ECO:0000303" key="11">
    <source>
    </source>
</evidence>
<evidence type="ECO:0000305" key="12"/>
<evidence type="ECO:0007829" key="13">
    <source>
        <dbReference type="PDB" id="2D9C"/>
    </source>
</evidence>
<evidence type="ECO:0007829" key="14">
    <source>
        <dbReference type="PDB" id="2JJU"/>
    </source>
</evidence>
<gene>
    <name type="primary">SIRPB1</name>
</gene>
<sequence>MPVPASWPHLPSPFLLMTLLLGRLTGVAGEDELQVIQPEKSVSVAAGESATLRCAMTSLIPVGPIMWFRGAGAGRELIYNQKEGHFPRVTTVSELTKRNNLDFSISISNITPADAGTYYCVKFRKGSPDDVEFKSGAGTELSVRAKPSAPVVSGPAVRATPEHTVSFTCESHGFSPRDITLKWFKNGNELSDFQTNVDPAGDSVSYSIHSTARVVLTRGDVHSQVICEIAHITLQGDPLRGTANLSEAIRVPPTLEVTQQPMRAENQANVTCQVSNFYPRGLQLTWLENGNVSRTETASTLIENKDGTYNWMSWLLVNTCAHRDDVVLTCQVEHDGQQAVSKSYALEISAHQKEHGSDITHEAALAPTAPLLVALLLGPKLLLVVGVSAIYICWKQKA</sequence>
<keyword id="KW-0002">3D-structure</keyword>
<keyword id="KW-0025">Alternative splicing</keyword>
<keyword id="KW-1003">Cell membrane</keyword>
<keyword id="KW-1015">Disulfide bond</keyword>
<keyword id="KW-0325">Glycoprotein</keyword>
<keyword id="KW-0393">Immunoglobulin domain</keyword>
<keyword id="KW-0472">Membrane</keyword>
<keyword id="KW-1267">Proteomics identification</keyword>
<keyword id="KW-1185">Reference proteome</keyword>
<keyword id="KW-0677">Repeat</keyword>
<keyword id="KW-0732">Signal</keyword>
<keyword id="KW-0812">Transmembrane</keyword>
<keyword id="KW-1133">Transmembrane helix</keyword>
<reference key="1">
    <citation type="journal article" date="1997" name="Nature">
        <title>A family of proteins that inhibit signalling through tyrosine kinase receptors.</title>
        <authorList>
            <person name="Kharitonenkov A."/>
            <person name="Chen Z."/>
            <person name="Sures I."/>
            <person name="Wang H."/>
            <person name="Schilling J."/>
            <person name="Ullrich A."/>
        </authorList>
    </citation>
    <scope>NUCLEOTIDE SEQUENCE [MRNA] (ISOFORM 1)</scope>
    <scope>VARIANTS MET-229 AND PRO-363</scope>
    <source>
        <tissue>Placenta</tissue>
    </source>
</reference>
<reference key="2">
    <citation type="journal article" date="2004" name="Nat. Genet.">
        <title>Complete sequencing and characterization of 21,243 full-length human cDNAs.</title>
        <authorList>
            <person name="Ota T."/>
            <person name="Suzuki Y."/>
            <person name="Nishikawa T."/>
            <person name="Otsuki T."/>
            <person name="Sugiyama T."/>
            <person name="Irie R."/>
            <person name="Wakamatsu A."/>
            <person name="Hayashi K."/>
            <person name="Sato H."/>
            <person name="Nagai K."/>
            <person name="Kimura K."/>
            <person name="Makita H."/>
            <person name="Sekine M."/>
            <person name="Obayashi M."/>
            <person name="Nishi T."/>
            <person name="Shibahara T."/>
            <person name="Tanaka T."/>
            <person name="Ishii S."/>
            <person name="Yamamoto J."/>
            <person name="Saito K."/>
            <person name="Kawai Y."/>
            <person name="Isono Y."/>
            <person name="Nakamura Y."/>
            <person name="Nagahari K."/>
            <person name="Murakami K."/>
            <person name="Yasuda T."/>
            <person name="Iwayanagi T."/>
            <person name="Wagatsuma M."/>
            <person name="Shiratori A."/>
            <person name="Sudo H."/>
            <person name="Hosoiri T."/>
            <person name="Kaku Y."/>
            <person name="Kodaira H."/>
            <person name="Kondo H."/>
            <person name="Sugawara M."/>
            <person name="Takahashi M."/>
            <person name="Kanda K."/>
            <person name="Yokoi T."/>
            <person name="Furuya T."/>
            <person name="Kikkawa E."/>
            <person name="Omura Y."/>
            <person name="Abe K."/>
            <person name="Kamihara K."/>
            <person name="Katsuta N."/>
            <person name="Sato K."/>
            <person name="Tanikawa M."/>
            <person name="Yamazaki M."/>
            <person name="Ninomiya K."/>
            <person name="Ishibashi T."/>
            <person name="Yamashita H."/>
            <person name="Murakawa K."/>
            <person name="Fujimori K."/>
            <person name="Tanai H."/>
            <person name="Kimata M."/>
            <person name="Watanabe M."/>
            <person name="Hiraoka S."/>
            <person name="Chiba Y."/>
            <person name="Ishida S."/>
            <person name="Ono Y."/>
            <person name="Takiguchi S."/>
            <person name="Watanabe S."/>
            <person name="Yosida M."/>
            <person name="Hotuta T."/>
            <person name="Kusano J."/>
            <person name="Kanehori K."/>
            <person name="Takahashi-Fujii A."/>
            <person name="Hara H."/>
            <person name="Tanase T.-O."/>
            <person name="Nomura Y."/>
            <person name="Togiya S."/>
            <person name="Komai F."/>
            <person name="Hara R."/>
            <person name="Takeuchi K."/>
            <person name="Arita M."/>
            <person name="Imose N."/>
            <person name="Musashino K."/>
            <person name="Yuuki H."/>
            <person name="Oshima A."/>
            <person name="Sasaki N."/>
            <person name="Aotsuka S."/>
            <person name="Yoshikawa Y."/>
            <person name="Matsunawa H."/>
            <person name="Ichihara T."/>
            <person name="Shiohata N."/>
            <person name="Sano S."/>
            <person name="Moriya S."/>
            <person name="Momiyama H."/>
            <person name="Satoh N."/>
            <person name="Takami S."/>
            <person name="Terashima Y."/>
            <person name="Suzuki O."/>
            <person name="Nakagawa S."/>
            <person name="Senoh A."/>
            <person name="Mizoguchi H."/>
            <person name="Goto Y."/>
            <person name="Shimizu F."/>
            <person name="Wakebe H."/>
            <person name="Hishigaki H."/>
            <person name="Watanabe T."/>
            <person name="Sugiyama A."/>
            <person name="Takemoto M."/>
            <person name="Kawakami B."/>
            <person name="Yamazaki M."/>
            <person name="Watanabe K."/>
            <person name="Kumagai A."/>
            <person name="Itakura S."/>
            <person name="Fukuzumi Y."/>
            <person name="Fujimori Y."/>
            <person name="Komiyama M."/>
            <person name="Tashiro H."/>
            <person name="Tanigami A."/>
            <person name="Fujiwara T."/>
            <person name="Ono T."/>
            <person name="Yamada K."/>
            <person name="Fujii Y."/>
            <person name="Ozaki K."/>
            <person name="Hirao M."/>
            <person name="Ohmori Y."/>
            <person name="Kawabata A."/>
            <person name="Hikiji T."/>
            <person name="Kobatake N."/>
            <person name="Inagaki H."/>
            <person name="Ikema Y."/>
            <person name="Okamoto S."/>
            <person name="Okitani R."/>
            <person name="Kawakami T."/>
            <person name="Noguchi S."/>
            <person name="Itoh T."/>
            <person name="Shigeta K."/>
            <person name="Senba T."/>
            <person name="Matsumura K."/>
            <person name="Nakajima Y."/>
            <person name="Mizuno T."/>
            <person name="Morinaga M."/>
            <person name="Sasaki M."/>
            <person name="Togashi T."/>
            <person name="Oyama M."/>
            <person name="Hata H."/>
            <person name="Watanabe M."/>
            <person name="Komatsu T."/>
            <person name="Mizushima-Sugano J."/>
            <person name="Satoh T."/>
            <person name="Shirai Y."/>
            <person name="Takahashi Y."/>
            <person name="Nakagawa K."/>
            <person name="Okumura K."/>
            <person name="Nagase T."/>
            <person name="Nomura N."/>
            <person name="Kikuchi H."/>
            <person name="Masuho Y."/>
            <person name="Yamashita R."/>
            <person name="Nakai K."/>
            <person name="Yada T."/>
            <person name="Nakamura Y."/>
            <person name="Ohara O."/>
            <person name="Isogai T."/>
            <person name="Sugano S."/>
        </authorList>
    </citation>
    <scope>NUCLEOTIDE SEQUENCE [LARGE SCALE MRNA] (ISOFORM 1)</scope>
    <scope>VARIANTS MET-229 AND PRO-363</scope>
    <source>
        <tissue>Neutrophil</tissue>
    </source>
</reference>
<reference key="3">
    <citation type="journal article" date="2001" name="Nature">
        <title>The DNA sequence and comparative analysis of human chromosome 20.</title>
        <authorList>
            <person name="Deloukas P."/>
            <person name="Matthews L.H."/>
            <person name="Ashurst J.L."/>
            <person name="Burton J."/>
            <person name="Gilbert J.G.R."/>
            <person name="Jones M."/>
            <person name="Stavrides G."/>
            <person name="Almeida J.P."/>
            <person name="Babbage A.K."/>
            <person name="Bagguley C.L."/>
            <person name="Bailey J."/>
            <person name="Barlow K.F."/>
            <person name="Bates K.N."/>
            <person name="Beard L.M."/>
            <person name="Beare D.M."/>
            <person name="Beasley O.P."/>
            <person name="Bird C.P."/>
            <person name="Blakey S.E."/>
            <person name="Bridgeman A.M."/>
            <person name="Brown A.J."/>
            <person name="Buck D."/>
            <person name="Burrill W.D."/>
            <person name="Butler A.P."/>
            <person name="Carder C."/>
            <person name="Carter N.P."/>
            <person name="Chapman J.C."/>
            <person name="Clamp M."/>
            <person name="Clark G."/>
            <person name="Clark L.N."/>
            <person name="Clark S.Y."/>
            <person name="Clee C.M."/>
            <person name="Clegg S."/>
            <person name="Cobley V.E."/>
            <person name="Collier R.E."/>
            <person name="Connor R.E."/>
            <person name="Corby N.R."/>
            <person name="Coulson A."/>
            <person name="Coville G.J."/>
            <person name="Deadman R."/>
            <person name="Dhami P.D."/>
            <person name="Dunn M."/>
            <person name="Ellington A.G."/>
            <person name="Frankland J.A."/>
            <person name="Fraser A."/>
            <person name="French L."/>
            <person name="Garner P."/>
            <person name="Grafham D.V."/>
            <person name="Griffiths C."/>
            <person name="Griffiths M.N.D."/>
            <person name="Gwilliam R."/>
            <person name="Hall R.E."/>
            <person name="Hammond S."/>
            <person name="Harley J.L."/>
            <person name="Heath P.D."/>
            <person name="Ho S."/>
            <person name="Holden J.L."/>
            <person name="Howden P.J."/>
            <person name="Huckle E."/>
            <person name="Hunt A.R."/>
            <person name="Hunt S.E."/>
            <person name="Jekosch K."/>
            <person name="Johnson C.M."/>
            <person name="Johnson D."/>
            <person name="Kay M.P."/>
            <person name="Kimberley A.M."/>
            <person name="King A."/>
            <person name="Knights A."/>
            <person name="Laird G.K."/>
            <person name="Lawlor S."/>
            <person name="Lehvaeslaiho M.H."/>
            <person name="Leversha M.A."/>
            <person name="Lloyd C."/>
            <person name="Lloyd D.M."/>
            <person name="Lovell J.D."/>
            <person name="Marsh V.L."/>
            <person name="Martin S.L."/>
            <person name="McConnachie L.J."/>
            <person name="McLay K."/>
            <person name="McMurray A.A."/>
            <person name="Milne S.A."/>
            <person name="Mistry D."/>
            <person name="Moore M.J.F."/>
            <person name="Mullikin J.C."/>
            <person name="Nickerson T."/>
            <person name="Oliver K."/>
            <person name="Parker A."/>
            <person name="Patel R."/>
            <person name="Pearce T.A.V."/>
            <person name="Peck A.I."/>
            <person name="Phillimore B.J.C.T."/>
            <person name="Prathalingam S.R."/>
            <person name="Plumb R.W."/>
            <person name="Ramsay H."/>
            <person name="Rice C.M."/>
            <person name="Ross M.T."/>
            <person name="Scott C.E."/>
            <person name="Sehra H.K."/>
            <person name="Shownkeen R."/>
            <person name="Sims S."/>
            <person name="Skuce C.D."/>
            <person name="Smith M.L."/>
            <person name="Soderlund C."/>
            <person name="Steward C.A."/>
            <person name="Sulston J.E."/>
            <person name="Swann R.M."/>
            <person name="Sycamore N."/>
            <person name="Taylor R."/>
            <person name="Tee L."/>
            <person name="Thomas D.W."/>
            <person name="Thorpe A."/>
            <person name="Tracey A."/>
            <person name="Tromans A.C."/>
            <person name="Vaudin M."/>
            <person name="Wall M."/>
            <person name="Wallis J.M."/>
            <person name="Whitehead S.L."/>
            <person name="Whittaker P."/>
            <person name="Willey D.L."/>
            <person name="Williams L."/>
            <person name="Williams S.A."/>
            <person name="Wilming L."/>
            <person name="Wray P.W."/>
            <person name="Hubbard T."/>
            <person name="Durbin R.M."/>
            <person name="Bentley D.R."/>
            <person name="Beck S."/>
            <person name="Rogers J."/>
        </authorList>
    </citation>
    <scope>NUCLEOTIDE SEQUENCE [LARGE SCALE GENOMIC DNA]</scope>
</reference>
<reference key="4">
    <citation type="journal article" date="2004" name="Genome Res.">
        <title>The status, quality, and expansion of the NIH full-length cDNA project: the Mammalian Gene Collection (MGC).</title>
        <authorList>
            <consortium name="The MGC Project Team"/>
        </authorList>
    </citation>
    <scope>NUCLEOTIDE SEQUENCE [LARGE SCALE MRNA] (ISOFORM 2)</scope>
    <scope>VARIANT PRO-363</scope>
    <source>
        <tissue>Skin</tissue>
    </source>
</reference>
<reference key="5">
    <citation type="journal article" date="2000" name="Eur. J. Immunol.">
        <title>Association of signal-regulatory proteins beta with KARAP/DAP-12.</title>
        <authorList>
            <person name="Tomasello E."/>
            <person name="Cant C."/>
            <person name="Buehring H.-J."/>
            <person name="Vely F."/>
            <person name="Andre P."/>
            <person name="Seiffert M."/>
            <person name="Ullrich A."/>
            <person name="Vivier E."/>
        </authorList>
    </citation>
    <scope>INTERACTION WITH TYROBP AND SYK</scope>
</reference>
<reference key="6">
    <citation type="journal article" date="2000" name="J. Immunol.">
        <title>Signal-regulatory protein beta 1 is a DAP12-associated activating receptor expressed in myeloid cells.</title>
        <authorList>
            <person name="Dietrich J."/>
            <person name="Cella M."/>
            <person name="Seiffert M."/>
            <person name="Buehring H.-J."/>
            <person name="Colonna M."/>
        </authorList>
    </citation>
    <scope>FUNCTION</scope>
    <scope>INTERACTION WITH TYROBP</scope>
    <scope>SUBCELLULAR LOCATION</scope>
    <scope>GLYCOSYLATION</scope>
    <scope>TISSUE SPECIFICITY</scope>
</reference>
<reference key="7">
    <citation type="journal article" date="2005" name="J. Biol. Chem.">
        <title>SIRPbeta1 is expressed as a disulfide-linked homodimer in leukocytes and positively regulates neutrophil transepithelial migration.</title>
        <authorList>
            <person name="Liu Y."/>
            <person name="Soto I."/>
            <person name="Tong Q."/>
            <person name="Chin A."/>
            <person name="Buhring H.J."/>
            <person name="Wu T."/>
            <person name="Zen K."/>
            <person name="Parkos C.A."/>
        </authorList>
    </citation>
    <scope>SUBUNIT</scope>
    <scope>INTERCHAIN DISULFIDE BOND</scope>
</reference>
<reference key="8">
    <citation type="journal article" date="2005" name="J. Proteome Res.">
        <title>Human plasma N-glycoproteome analysis by immunoaffinity subtraction, hydrazide chemistry, and mass spectrometry.</title>
        <authorList>
            <person name="Liu T."/>
            <person name="Qian W.-J."/>
            <person name="Gritsenko M.A."/>
            <person name="Camp D.G. II"/>
            <person name="Monroe M.E."/>
            <person name="Moore R.J."/>
            <person name="Smith R.D."/>
        </authorList>
    </citation>
    <scope>GLYCOSYLATION [LARGE SCALE ANALYSIS] AT ASN-244</scope>
    <source>
        <tissue>Plasma</tissue>
    </source>
</reference>
<reference key="9">
    <citation type="journal article" date="2008" name="Mol. Cell">
        <title>Paired receptor specificity explained by structures of signal regulatory proteins alone and complexed with CD47.</title>
        <authorList>
            <person name="Hatherley D."/>
            <person name="Graham S.C."/>
            <person name="Turner J."/>
            <person name="Harlos K."/>
            <person name="Stuart D.I."/>
            <person name="Barclay A.N."/>
        </authorList>
    </citation>
    <scope>X-RAY CRYSTALLOGRAPHY (1.19 ANGSTROMS) OF 30-148</scope>
    <scope>DISULFIDE BOND</scope>
</reference>
<reference key="10">
    <citation type="submission" date="2006-12" db="PDB data bank">
        <title>Solution structure of the first Ig-like domain of signal-regulatory protein beta-1 (SIRP-beta-1).</title>
        <authorList>
            <consortium name="RIKEN structural genomics initiative (RSGI)"/>
        </authorList>
    </citation>
    <scope>STRUCTURE BY NMR OF 33-155</scope>
</reference>
<proteinExistence type="evidence at protein level"/>
<name>SIRB1_HUMAN</name>
<comment type="function">
    <text evidence="3">Immunoglobulin-like cell surface receptor involved in the negative regulation of receptor tyrosine kinase-coupled signaling processes. Also participates in the recruitment of tyrosine kinase SYK. Triggers activation of myeloid cells when associated with TYROBP (PubMed:10604985).</text>
</comment>
<comment type="subunit">
    <text evidence="3 4 7 9">Homodimer; disulfide-linked. Interacts with TYROBP. This interaction results in the recruitment of SYK.</text>
</comment>
<comment type="interaction">
    <interactant intactId="EBI-2615458">
        <id>O00241</id>
    </interactant>
    <interactant intactId="EBI-2214794">
        <id>O43914</id>
        <label>TYROBP</label>
    </interactant>
    <organismsDiffer>false</organismsDiffer>
    <experiments>4</experiments>
</comment>
<comment type="interaction">
    <interactant intactId="EBI-10179231">
        <id>O00241-2</id>
    </interactant>
    <interactant intactId="EBI-1220105">
        <id>P02654</id>
        <label>APOC1</label>
    </interactant>
    <organismsDiffer>false</organismsDiffer>
    <experiments>3</experiments>
</comment>
<comment type="interaction">
    <interactant intactId="EBI-10179231">
        <id>O00241-2</id>
    </interactant>
    <interactant intactId="EBI-953896">
        <id>Q9NP55</id>
        <label>BPIFA1</label>
    </interactant>
    <organismsDiffer>false</organismsDiffer>
    <experiments>3</experiments>
</comment>
<comment type="interaction">
    <interactant intactId="EBI-10179231">
        <id>O00241-2</id>
    </interactant>
    <interactant intactId="EBI-7875264">
        <id>O75553</id>
        <label>DAB1</label>
    </interactant>
    <organismsDiffer>false</organismsDiffer>
    <experiments>3</experiments>
</comment>
<comment type="interaction">
    <interactant intactId="EBI-10179231">
        <id>O00241-2</id>
    </interactant>
    <interactant intactId="EBI-748397">
        <id>P50222</id>
        <label>MEOX2</label>
    </interactant>
    <organismsDiffer>false</organismsDiffer>
    <experiments>3</experiments>
</comment>
<comment type="interaction">
    <interactant intactId="EBI-10179231">
        <id>O00241-2</id>
    </interactant>
    <interactant intactId="EBI-12123390">
        <id>Q9NWB1-5</id>
        <label>RBFOX1</label>
    </interactant>
    <organismsDiffer>false</organismsDiffer>
    <experiments>3</experiments>
</comment>
<comment type="interaction">
    <interactant intactId="EBI-10179231">
        <id>O00241-2</id>
    </interactant>
    <interactant intactId="EBI-740322">
        <id>Q93062</id>
        <label>RBPMS</label>
    </interactant>
    <organismsDiffer>false</organismsDiffer>
    <experiments>3</experiments>
</comment>
<comment type="subcellular location">
    <subcellularLocation>
        <location evidence="3">Cell membrane</location>
        <topology evidence="1">Single-pass type I membrane protein</topology>
    </subcellularLocation>
</comment>
<comment type="alternative products">
    <event type="alternative splicing"/>
    <isoform>
        <id>O00241-1</id>
        <name>1</name>
        <sequence type="displayed"/>
    </isoform>
    <isoform>
        <id>O00241-2</id>
        <name>2</name>
        <sequence type="described" ref="VSP_007026"/>
    </isoform>
    <isoform>
        <id>Q5TFQ8-1</id>
        <name>3</name>
        <sequence type="external"/>
    </isoform>
</comment>
<comment type="tissue specificity">
    <text evidence="3">Detected in monocytes and dendritic cells.</text>
</comment>
<comment type="PTM">
    <text evidence="3 8">N-glycosylated.</text>
</comment>